<dbReference type="EMBL" id="BA000002">
    <property type="protein sequence ID" value="BAA80447.1"/>
    <property type="molecule type" value="Genomic_DNA"/>
</dbReference>
<dbReference type="PIR" id="A72624">
    <property type="entry name" value="A72624"/>
</dbReference>
<dbReference type="RefSeq" id="WP_010866378.1">
    <property type="nucleotide sequence ID" value="NC_000854.2"/>
</dbReference>
<dbReference type="SMR" id="Q9YC01"/>
<dbReference type="STRING" id="272557.APE_1449"/>
<dbReference type="MEROPS" id="T01.970"/>
<dbReference type="EnsemblBacteria" id="BAA80447">
    <property type="protein sequence ID" value="BAA80447"/>
    <property type="gene ID" value="APE_1449"/>
</dbReference>
<dbReference type="GeneID" id="1446023"/>
<dbReference type="KEGG" id="ape:APE_1449"/>
<dbReference type="PATRIC" id="fig|272557.25.peg.980"/>
<dbReference type="eggNOG" id="arCOG00971">
    <property type="taxonomic scope" value="Archaea"/>
</dbReference>
<dbReference type="Proteomes" id="UP000002518">
    <property type="component" value="Chromosome"/>
</dbReference>
<dbReference type="GO" id="GO:0005737">
    <property type="term" value="C:cytoplasm"/>
    <property type="evidence" value="ECO:0007669"/>
    <property type="project" value="UniProtKB-SubCell"/>
</dbReference>
<dbReference type="GO" id="GO:0019773">
    <property type="term" value="C:proteasome core complex, alpha-subunit complex"/>
    <property type="evidence" value="ECO:0000250"/>
    <property type="project" value="UniProtKB"/>
</dbReference>
<dbReference type="GO" id="GO:0004298">
    <property type="term" value="F:threonine-type endopeptidase activity"/>
    <property type="evidence" value="ECO:0007669"/>
    <property type="project" value="InterPro"/>
</dbReference>
<dbReference type="GO" id="GO:0010498">
    <property type="term" value="P:proteasomal protein catabolic process"/>
    <property type="evidence" value="ECO:0007669"/>
    <property type="project" value="UniProtKB-UniRule"/>
</dbReference>
<dbReference type="GO" id="GO:0006511">
    <property type="term" value="P:ubiquitin-dependent protein catabolic process"/>
    <property type="evidence" value="ECO:0007669"/>
    <property type="project" value="InterPro"/>
</dbReference>
<dbReference type="CDD" id="cd03756">
    <property type="entry name" value="proteasome_alpha_archeal"/>
    <property type="match status" value="1"/>
</dbReference>
<dbReference type="FunFam" id="3.60.20.10:FF:000004">
    <property type="entry name" value="Proteasome subunit alpha type-4"/>
    <property type="match status" value="1"/>
</dbReference>
<dbReference type="Gene3D" id="3.60.20.10">
    <property type="entry name" value="Glutamine Phosphoribosylpyrophosphate, subunit 1, domain 1"/>
    <property type="match status" value="1"/>
</dbReference>
<dbReference type="HAMAP" id="MF_00289_A">
    <property type="entry name" value="Proteasome_A_A"/>
    <property type="match status" value="1"/>
</dbReference>
<dbReference type="InterPro" id="IPR029055">
    <property type="entry name" value="Ntn_hydrolases_N"/>
</dbReference>
<dbReference type="InterPro" id="IPR050115">
    <property type="entry name" value="Proteasome_alpha"/>
</dbReference>
<dbReference type="InterPro" id="IPR023332">
    <property type="entry name" value="Proteasome_alpha-type"/>
</dbReference>
<dbReference type="InterPro" id="IPR019982">
    <property type="entry name" value="Proteasome_asu_arc"/>
</dbReference>
<dbReference type="InterPro" id="IPR000426">
    <property type="entry name" value="Proteasome_asu_N"/>
</dbReference>
<dbReference type="InterPro" id="IPR001353">
    <property type="entry name" value="Proteasome_sua/b"/>
</dbReference>
<dbReference type="NCBIfam" id="TIGR03633">
    <property type="entry name" value="arc_protsome_A"/>
    <property type="match status" value="1"/>
</dbReference>
<dbReference type="NCBIfam" id="NF003075">
    <property type="entry name" value="PRK03996.1"/>
    <property type="match status" value="1"/>
</dbReference>
<dbReference type="PANTHER" id="PTHR11599">
    <property type="entry name" value="PROTEASOME SUBUNIT ALPHA/BETA"/>
    <property type="match status" value="1"/>
</dbReference>
<dbReference type="Pfam" id="PF00227">
    <property type="entry name" value="Proteasome"/>
    <property type="match status" value="1"/>
</dbReference>
<dbReference type="Pfam" id="PF10584">
    <property type="entry name" value="Proteasome_A_N"/>
    <property type="match status" value="1"/>
</dbReference>
<dbReference type="SMART" id="SM00948">
    <property type="entry name" value="Proteasome_A_N"/>
    <property type="match status" value="1"/>
</dbReference>
<dbReference type="SUPFAM" id="SSF56235">
    <property type="entry name" value="N-terminal nucleophile aminohydrolases (Ntn hydrolases)"/>
    <property type="match status" value="1"/>
</dbReference>
<dbReference type="PROSITE" id="PS00388">
    <property type="entry name" value="PROTEASOME_ALPHA_1"/>
    <property type="match status" value="1"/>
</dbReference>
<dbReference type="PROSITE" id="PS51475">
    <property type="entry name" value="PROTEASOME_ALPHA_2"/>
    <property type="match status" value="1"/>
</dbReference>
<comment type="function">
    <text evidence="1">Component of the proteasome core, a large protease complex with broad specificity involved in protein degradation.</text>
</comment>
<comment type="activity regulation">
    <text evidence="1">The formation of the proteasomal ATPase PAN-20S proteasome complex, via the docking of the C-termini of PAN into the intersubunit pockets in the alpha-rings, triggers opening of the gate for substrate entry. Interconversion between the open-gate and close-gate conformations leads to a dynamic regulation of the 20S proteasome proteolysis activity.</text>
</comment>
<comment type="subunit">
    <text evidence="1">The 20S proteasome core is composed of 14 alpha and 14 beta subunits that assemble into four stacked heptameric rings, resulting in a barrel-shaped structure. The two inner rings, each composed of seven catalytic beta subunits, are sandwiched by two outer rings, each composed of seven alpha subunits. The catalytic chamber with the active sites is on the inside of the barrel. Has a gated structure, the ends of the cylinder being occluded by the N-termini of the alpha-subunits. Is capped at one or both ends by the proteasome regulatory ATPase, PAN.</text>
</comment>
<comment type="subcellular location">
    <subcellularLocation>
        <location evidence="1">Cytoplasm</location>
    </subcellularLocation>
</comment>
<comment type="similarity">
    <text evidence="1">Belongs to the peptidase T1A family.</text>
</comment>
<gene>
    <name evidence="1" type="primary">psmA</name>
    <name type="ordered locus">APE_1449</name>
</gene>
<keyword id="KW-0963">Cytoplasm</keyword>
<keyword id="KW-0647">Proteasome</keyword>
<keyword id="KW-1185">Reference proteome</keyword>
<feature type="chain" id="PRO_0000124166" description="Proteasome subunit alpha">
    <location>
        <begin position="1"/>
        <end position="258"/>
    </location>
</feature>
<sequence>MAFPMPPHQTAYDRAATIFSPEGDLYQVRYAFEAVKKGWTSLGIKTNEGVVIAAEKRFIGPLVDIDDIDKIYKIDDHIGVAFAGMGGDGRILIDYARVFTVRHRLLYGEPPPVELVAKVVADVKQAYTQHGGVRPFGVALIFAGVNPDGTTKVYRTDPGGQYFSFKAIAIGSGEQVANEMFEKHYRSDMSLEEATKLALKILYAIIRKTVEDKEKAIATLPDQVELAYITVKERMFTKMTKEQVKEIVDSMREELLQL</sequence>
<accession>Q9YC01</accession>
<evidence type="ECO:0000255" key="1">
    <source>
        <dbReference type="HAMAP-Rule" id="MF_00289"/>
    </source>
</evidence>
<organism>
    <name type="scientific">Aeropyrum pernix (strain ATCC 700893 / DSM 11879 / JCM 9820 / NBRC 100138 / K1)</name>
    <dbReference type="NCBI Taxonomy" id="272557"/>
    <lineage>
        <taxon>Archaea</taxon>
        <taxon>Thermoproteota</taxon>
        <taxon>Thermoprotei</taxon>
        <taxon>Desulfurococcales</taxon>
        <taxon>Desulfurococcaceae</taxon>
        <taxon>Aeropyrum</taxon>
    </lineage>
</organism>
<name>PSA_AERPE</name>
<protein>
    <recommendedName>
        <fullName evidence="1">Proteasome subunit alpha</fullName>
    </recommendedName>
    <alternativeName>
        <fullName evidence="1">20S proteasome alpha subunit</fullName>
    </alternativeName>
    <alternativeName>
        <fullName evidence="1">Proteasome core protein PsmA</fullName>
    </alternativeName>
</protein>
<reference key="1">
    <citation type="journal article" date="1999" name="DNA Res.">
        <title>Complete genome sequence of an aerobic hyper-thermophilic crenarchaeon, Aeropyrum pernix K1.</title>
        <authorList>
            <person name="Kawarabayasi Y."/>
            <person name="Hino Y."/>
            <person name="Horikawa H."/>
            <person name="Yamazaki S."/>
            <person name="Haikawa Y."/>
            <person name="Jin-no K."/>
            <person name="Takahashi M."/>
            <person name="Sekine M."/>
            <person name="Baba S."/>
            <person name="Ankai A."/>
            <person name="Kosugi H."/>
            <person name="Hosoyama A."/>
            <person name="Fukui S."/>
            <person name="Nagai Y."/>
            <person name="Nishijima K."/>
            <person name="Nakazawa H."/>
            <person name="Takamiya M."/>
            <person name="Masuda S."/>
            <person name="Funahashi T."/>
            <person name="Tanaka T."/>
            <person name="Kudoh Y."/>
            <person name="Yamazaki J."/>
            <person name="Kushida N."/>
            <person name="Oguchi A."/>
            <person name="Aoki K."/>
            <person name="Kubota K."/>
            <person name="Nakamura Y."/>
            <person name="Nomura N."/>
            <person name="Sako Y."/>
            <person name="Kikuchi H."/>
        </authorList>
    </citation>
    <scope>NUCLEOTIDE SEQUENCE [LARGE SCALE GENOMIC DNA]</scope>
    <source>
        <strain>ATCC 700893 / DSM 11879 / JCM 9820 / NBRC 100138 / K1</strain>
    </source>
</reference>
<proteinExistence type="inferred from homology"/>